<feature type="chain" id="PRO_0000185623" description="Probable D-serine dehydratase">
    <location>
        <begin position="1"/>
        <end position="443"/>
    </location>
</feature>
<feature type="modified residue" description="N6-(pyridoxal phosphate)lysine" evidence="1">
    <location>
        <position position="118"/>
    </location>
</feature>
<proteinExistence type="inferred from homology"/>
<keyword id="KW-0456">Lyase</keyword>
<keyword id="KW-0663">Pyridoxal phosphate</keyword>
<organism>
    <name type="scientific">Vibrio parahaemolyticus serotype O3:K6 (strain RIMD 2210633)</name>
    <dbReference type="NCBI Taxonomy" id="223926"/>
    <lineage>
        <taxon>Bacteria</taxon>
        <taxon>Pseudomonadati</taxon>
        <taxon>Pseudomonadota</taxon>
        <taxon>Gammaproteobacteria</taxon>
        <taxon>Vibrionales</taxon>
        <taxon>Vibrionaceae</taxon>
        <taxon>Vibrio</taxon>
    </lineage>
</organism>
<dbReference type="EC" id="4.3.1.18" evidence="1"/>
<dbReference type="EMBL" id="BA000031">
    <property type="protein sequence ID" value="BAC59511.1"/>
    <property type="molecule type" value="Genomic_DNA"/>
</dbReference>
<dbReference type="RefSeq" id="NP_797627.1">
    <property type="nucleotide sequence ID" value="NC_004603.1"/>
</dbReference>
<dbReference type="RefSeq" id="WP_005483547.1">
    <property type="nucleotide sequence ID" value="NC_004603.1"/>
</dbReference>
<dbReference type="SMR" id="Q87QA2"/>
<dbReference type="GeneID" id="1188753"/>
<dbReference type="KEGG" id="vpa:VP1248"/>
<dbReference type="PATRIC" id="fig|223926.6.peg.1187"/>
<dbReference type="eggNOG" id="COG3048">
    <property type="taxonomic scope" value="Bacteria"/>
</dbReference>
<dbReference type="HOGENOM" id="CLU_035707_0_0_6"/>
<dbReference type="Proteomes" id="UP000002493">
    <property type="component" value="Chromosome 1"/>
</dbReference>
<dbReference type="GO" id="GO:0008721">
    <property type="term" value="F:D-serine ammonia-lyase activity"/>
    <property type="evidence" value="ECO:0007669"/>
    <property type="project" value="UniProtKB-EC"/>
</dbReference>
<dbReference type="GO" id="GO:0016836">
    <property type="term" value="F:hydro-lyase activity"/>
    <property type="evidence" value="ECO:0007669"/>
    <property type="project" value="UniProtKB-UniRule"/>
</dbReference>
<dbReference type="GO" id="GO:0030170">
    <property type="term" value="F:pyridoxal phosphate binding"/>
    <property type="evidence" value="ECO:0007669"/>
    <property type="project" value="InterPro"/>
</dbReference>
<dbReference type="GO" id="GO:0036088">
    <property type="term" value="P:D-serine catabolic process"/>
    <property type="evidence" value="ECO:0007669"/>
    <property type="project" value="TreeGrafter"/>
</dbReference>
<dbReference type="GO" id="GO:0009097">
    <property type="term" value="P:isoleucine biosynthetic process"/>
    <property type="evidence" value="ECO:0007669"/>
    <property type="project" value="TreeGrafter"/>
</dbReference>
<dbReference type="CDD" id="cd06447">
    <property type="entry name" value="D-Ser-dehyd"/>
    <property type="match status" value="1"/>
</dbReference>
<dbReference type="FunFam" id="3.40.50.1100:FF:000018">
    <property type="entry name" value="D-serine dehydratase"/>
    <property type="match status" value="1"/>
</dbReference>
<dbReference type="Gene3D" id="3.40.50.1100">
    <property type="match status" value="2"/>
</dbReference>
<dbReference type="HAMAP" id="MF_01030">
    <property type="entry name" value="D_Ser_dehydrat"/>
    <property type="match status" value="1"/>
</dbReference>
<dbReference type="InterPro" id="IPR011780">
    <property type="entry name" value="D_Ser_am_lyase"/>
</dbReference>
<dbReference type="InterPro" id="IPR050147">
    <property type="entry name" value="Ser/Thr_Dehydratase"/>
</dbReference>
<dbReference type="InterPro" id="IPR000634">
    <property type="entry name" value="Ser/Thr_deHydtase_PyrdxlP-BS"/>
</dbReference>
<dbReference type="InterPro" id="IPR001926">
    <property type="entry name" value="TrpB-like_PALP"/>
</dbReference>
<dbReference type="InterPro" id="IPR036052">
    <property type="entry name" value="TrpB-like_PALP_sf"/>
</dbReference>
<dbReference type="NCBIfam" id="TIGR02035">
    <property type="entry name" value="D_Ser_am_lyase"/>
    <property type="match status" value="1"/>
</dbReference>
<dbReference type="NCBIfam" id="NF002823">
    <property type="entry name" value="PRK02991.1"/>
    <property type="match status" value="1"/>
</dbReference>
<dbReference type="PANTHER" id="PTHR48078:SF9">
    <property type="entry name" value="D-SERINE DEHYDRATASE"/>
    <property type="match status" value="1"/>
</dbReference>
<dbReference type="PANTHER" id="PTHR48078">
    <property type="entry name" value="THREONINE DEHYDRATASE, MITOCHONDRIAL-RELATED"/>
    <property type="match status" value="1"/>
</dbReference>
<dbReference type="Pfam" id="PF00291">
    <property type="entry name" value="PALP"/>
    <property type="match status" value="1"/>
</dbReference>
<dbReference type="SUPFAM" id="SSF53686">
    <property type="entry name" value="Tryptophan synthase beta subunit-like PLP-dependent enzymes"/>
    <property type="match status" value="1"/>
</dbReference>
<dbReference type="PROSITE" id="PS00165">
    <property type="entry name" value="DEHYDRATASE_SER_THR"/>
    <property type="match status" value="1"/>
</dbReference>
<accession>Q87QA2</accession>
<protein>
    <recommendedName>
        <fullName evidence="1">Probable D-serine dehydratase</fullName>
        <ecNumber evidence="1">4.3.1.18</ecNumber>
    </recommendedName>
    <alternativeName>
        <fullName evidence="1">D-serine deaminase</fullName>
        <shortName evidence="1">DSD</shortName>
    </alternativeName>
</protein>
<reference key="1">
    <citation type="journal article" date="2003" name="Lancet">
        <title>Genome sequence of Vibrio parahaemolyticus: a pathogenic mechanism distinct from that of V. cholerae.</title>
        <authorList>
            <person name="Makino K."/>
            <person name="Oshima K."/>
            <person name="Kurokawa K."/>
            <person name="Yokoyama K."/>
            <person name="Uda T."/>
            <person name="Tagomori K."/>
            <person name="Iijima Y."/>
            <person name="Najima M."/>
            <person name="Nakano M."/>
            <person name="Yamashita A."/>
            <person name="Kubota Y."/>
            <person name="Kimura S."/>
            <person name="Yasunaga T."/>
            <person name="Honda T."/>
            <person name="Shinagawa H."/>
            <person name="Hattori M."/>
            <person name="Iida T."/>
        </authorList>
    </citation>
    <scope>NUCLEOTIDE SEQUENCE [LARGE SCALE GENOMIC DNA]</scope>
    <source>
        <strain>RIMD 2210633</strain>
    </source>
</reference>
<sequence>MNKLNVEVLKKQFPLVEQLINLDEVCWFNPNVTSLEEGLPHVGLNAEDIHVASARLKRFAPYLMKAFPETKAASGLIESPVVDIPKMKAALETQYNVPIFGRLMLKLDSHLPISGSIKARGGIYEVLVHAEKLAIATGLLSESDDYSKLLSGEFRQFFQQYSIAVGSTGNLGMSIGMMSAKLGFSVSVHMSADAREWKKNKLRSHGVNVVEYEQDYGVAVEQGRKQAESDPNCFFIDDENSQTLFLGYSVAGERLKQQFDDLGIVVDERHPLFVYLPCGVGGGPGGVAFGLKVAFGDHVHCIFAEPTHSPCMLLGVHTGLHDEIAVQDIGIDNLTAADGLAVGRPSGFVGRAMERLIDGYYTVTDERMYQLLGELSEREGINLEPSALAGMMGAVHVSGSLHYQTRLQLTDERLKNATHLVWATGGGMVPEAEMSADLAKSGR</sequence>
<evidence type="ECO:0000255" key="1">
    <source>
        <dbReference type="HAMAP-Rule" id="MF_01030"/>
    </source>
</evidence>
<name>SDHD_VIBPA</name>
<gene>
    <name evidence="1" type="primary">dsdA</name>
    <name type="ordered locus">VP1248</name>
</gene>
<comment type="catalytic activity">
    <reaction evidence="1">
        <text>D-serine = pyruvate + NH4(+)</text>
        <dbReference type="Rhea" id="RHEA:13977"/>
        <dbReference type="ChEBI" id="CHEBI:15361"/>
        <dbReference type="ChEBI" id="CHEBI:28938"/>
        <dbReference type="ChEBI" id="CHEBI:35247"/>
        <dbReference type="EC" id="4.3.1.18"/>
    </reaction>
</comment>
<comment type="cofactor">
    <cofactor evidence="1">
        <name>pyridoxal 5'-phosphate</name>
        <dbReference type="ChEBI" id="CHEBI:597326"/>
    </cofactor>
</comment>
<comment type="similarity">
    <text evidence="1">Belongs to the serine/threonine dehydratase family. DsdA subfamily.</text>
</comment>